<comment type="function">
    <text evidence="1">Removes the N-terminal methionine from nascent proteins. The N-terminal methionine is often cleaved when the second residue in the primary sequence is small and uncharged (Met-Ala-, Cys, Gly, Pro, Ser, Thr, or Val). Requires deformylation of the N(alpha)-formylated initiator methionine before it can be hydrolyzed.</text>
</comment>
<comment type="catalytic activity">
    <reaction evidence="1">
        <text>Release of N-terminal amino acids, preferentially methionine, from peptides and arylamides.</text>
        <dbReference type="EC" id="3.4.11.18"/>
    </reaction>
</comment>
<comment type="cofactor">
    <cofactor evidence="1">
        <name>Co(2+)</name>
        <dbReference type="ChEBI" id="CHEBI:48828"/>
    </cofactor>
    <cofactor evidence="1">
        <name>Zn(2+)</name>
        <dbReference type="ChEBI" id="CHEBI:29105"/>
    </cofactor>
    <cofactor evidence="1">
        <name>Mn(2+)</name>
        <dbReference type="ChEBI" id="CHEBI:29035"/>
    </cofactor>
    <cofactor evidence="1">
        <name>Fe(2+)</name>
        <dbReference type="ChEBI" id="CHEBI:29033"/>
    </cofactor>
    <text evidence="1">Binds 2 divalent metal cations per subunit. Has a high-affinity and a low affinity metal-binding site. The true nature of the physiological cofactor is under debate. The enzyme is active with cobalt, zinc, manganese or divalent iron ions. Most likely, methionine aminopeptidases function as mononuclear Fe(2+)-metalloproteases under physiological conditions, and the catalytically relevant metal-binding site has been assigned to the histidine-containing high-affinity site.</text>
</comment>
<comment type="subunit">
    <text evidence="1">Monomer.</text>
</comment>
<comment type="similarity">
    <text evidence="1">Belongs to the peptidase M24A family. Methionine aminopeptidase type 1 subfamily.</text>
</comment>
<comment type="sequence caution" evidence="2">
    <conflict type="erroneous initiation">
        <sequence resource="EMBL-CDS" id="AAF38634"/>
    </conflict>
</comment>
<comment type="sequence caution" evidence="2">
    <conflict type="erroneous initiation">
        <sequence resource="EMBL-CDS" id="AAP98976"/>
    </conflict>
</comment>
<reference key="1">
    <citation type="journal article" date="1999" name="Nat. Genet.">
        <title>Comparative genomes of Chlamydia pneumoniae and C. trachomatis.</title>
        <authorList>
            <person name="Kalman S."/>
            <person name="Mitchell W.P."/>
            <person name="Marathe R."/>
            <person name="Lammel C.J."/>
            <person name="Fan J."/>
            <person name="Hyman R.W."/>
            <person name="Olinger L."/>
            <person name="Grimwood J."/>
            <person name="Davis R.W."/>
            <person name="Stephens R.S."/>
        </authorList>
    </citation>
    <scope>NUCLEOTIDE SEQUENCE [LARGE SCALE GENOMIC DNA]</scope>
    <source>
        <strain>CWL029</strain>
    </source>
</reference>
<reference key="2">
    <citation type="journal article" date="2000" name="Nucleic Acids Res.">
        <title>Genome sequences of Chlamydia trachomatis MoPn and Chlamydia pneumoniae AR39.</title>
        <authorList>
            <person name="Read T.D."/>
            <person name="Brunham R.C."/>
            <person name="Shen C."/>
            <person name="Gill S.R."/>
            <person name="Heidelberg J.F."/>
            <person name="White O."/>
            <person name="Hickey E.K."/>
            <person name="Peterson J.D."/>
            <person name="Utterback T.R."/>
            <person name="Berry K.J."/>
            <person name="Bass S."/>
            <person name="Linher K.D."/>
            <person name="Weidman J.F."/>
            <person name="Khouri H.M."/>
            <person name="Craven B."/>
            <person name="Bowman C."/>
            <person name="Dodson R.J."/>
            <person name="Gwinn M.L."/>
            <person name="Nelson W.C."/>
            <person name="DeBoy R.T."/>
            <person name="Kolonay J.F."/>
            <person name="McClarty G."/>
            <person name="Salzberg S.L."/>
            <person name="Eisen J.A."/>
            <person name="Fraser C.M."/>
        </authorList>
    </citation>
    <scope>NUCLEOTIDE SEQUENCE [LARGE SCALE GENOMIC DNA]</scope>
    <source>
        <strain>AR39</strain>
    </source>
</reference>
<reference key="3">
    <citation type="journal article" date="2000" name="Nucleic Acids Res.">
        <title>Comparison of whole genome sequences of Chlamydia pneumoniae J138 from Japan and CWL029 from USA.</title>
        <authorList>
            <person name="Shirai M."/>
            <person name="Hirakawa H."/>
            <person name="Kimoto M."/>
            <person name="Tabuchi M."/>
            <person name="Kishi F."/>
            <person name="Ouchi K."/>
            <person name="Shiba T."/>
            <person name="Ishii K."/>
            <person name="Hattori M."/>
            <person name="Kuhara S."/>
            <person name="Nakazawa T."/>
        </authorList>
    </citation>
    <scope>NUCLEOTIDE SEQUENCE [LARGE SCALE GENOMIC DNA]</scope>
    <source>
        <strain>J138</strain>
    </source>
</reference>
<reference key="4">
    <citation type="submission" date="2002-05" db="EMBL/GenBank/DDBJ databases">
        <title>The genome sequence of Chlamydia pneumoniae TW183 and comparison with other Chlamydia strains based on whole genome sequence analysis.</title>
        <authorList>
            <person name="Geng M.M."/>
            <person name="Schuhmacher A."/>
            <person name="Muehldorfer I."/>
            <person name="Bensch K.W."/>
            <person name="Schaefer K.P."/>
            <person name="Schneider S."/>
            <person name="Pohl T."/>
            <person name="Essig A."/>
            <person name="Marre R."/>
            <person name="Melchers K."/>
        </authorList>
    </citation>
    <scope>NUCLEOTIDE SEQUENCE [LARGE SCALE GENOMIC DNA]</scope>
    <source>
        <strain>TW-183</strain>
    </source>
</reference>
<name>MAP1_CHLPN</name>
<feature type="chain" id="PRO_0000148933" description="Methionine aminopeptidase">
    <location>
        <begin position="1"/>
        <end position="291"/>
    </location>
</feature>
<feature type="binding site" evidence="1">
    <location>
        <position position="118"/>
    </location>
    <ligand>
        <name>substrate</name>
    </ligand>
</feature>
<feature type="binding site" evidence="1">
    <location>
        <position position="135"/>
    </location>
    <ligand>
        <name>a divalent metal cation</name>
        <dbReference type="ChEBI" id="CHEBI:60240"/>
        <label>1</label>
    </ligand>
</feature>
<feature type="binding site" evidence="1">
    <location>
        <position position="146"/>
    </location>
    <ligand>
        <name>a divalent metal cation</name>
        <dbReference type="ChEBI" id="CHEBI:60240"/>
        <label>1</label>
    </ligand>
</feature>
<feature type="binding site" evidence="1">
    <location>
        <position position="146"/>
    </location>
    <ligand>
        <name>a divalent metal cation</name>
        <dbReference type="ChEBI" id="CHEBI:60240"/>
        <label>2</label>
        <note>catalytic</note>
    </ligand>
</feature>
<feature type="binding site" evidence="1">
    <location>
        <position position="209"/>
    </location>
    <ligand>
        <name>a divalent metal cation</name>
        <dbReference type="ChEBI" id="CHEBI:60240"/>
        <label>2</label>
        <note>catalytic</note>
    </ligand>
</feature>
<feature type="binding site" evidence="1">
    <location>
        <position position="216"/>
    </location>
    <ligand>
        <name>substrate</name>
    </ligand>
</feature>
<feature type="binding site" evidence="1">
    <location>
        <position position="241"/>
    </location>
    <ligand>
        <name>a divalent metal cation</name>
        <dbReference type="ChEBI" id="CHEBI:60240"/>
        <label>2</label>
        <note>catalytic</note>
    </ligand>
</feature>
<feature type="binding site" evidence="1">
    <location>
        <position position="273"/>
    </location>
    <ligand>
        <name>a divalent metal cation</name>
        <dbReference type="ChEBI" id="CHEBI:60240"/>
        <label>1</label>
    </ligand>
</feature>
<feature type="binding site" evidence="1">
    <location>
        <position position="273"/>
    </location>
    <ligand>
        <name>a divalent metal cation</name>
        <dbReference type="ChEBI" id="CHEBI:60240"/>
        <label>2</label>
        <note>catalytic</note>
    </ligand>
</feature>
<evidence type="ECO:0000255" key="1">
    <source>
        <dbReference type="HAMAP-Rule" id="MF_01974"/>
    </source>
</evidence>
<evidence type="ECO:0000305" key="2"/>
<accession>Q9Z6Q0</accession>
<accession>Q9JQD4</accession>
<accession>Q9K1X1</accession>
<keyword id="KW-0031">Aminopeptidase</keyword>
<keyword id="KW-0378">Hydrolase</keyword>
<keyword id="KW-0479">Metal-binding</keyword>
<keyword id="KW-0645">Protease</keyword>
<dbReference type="EC" id="3.4.11.18" evidence="1"/>
<dbReference type="EMBL" id="AE001363">
    <property type="protein sequence ID" value="AAD19146.1"/>
    <property type="molecule type" value="Genomic_DNA"/>
</dbReference>
<dbReference type="EMBL" id="AE002161">
    <property type="protein sequence ID" value="AAF38634.1"/>
    <property type="status" value="ALT_INIT"/>
    <property type="molecule type" value="Genomic_DNA"/>
</dbReference>
<dbReference type="EMBL" id="BA000008">
    <property type="protein sequence ID" value="BAA99216.1"/>
    <property type="molecule type" value="Genomic_DNA"/>
</dbReference>
<dbReference type="EMBL" id="AE009440">
    <property type="protein sequence ID" value="AAP98976.1"/>
    <property type="status" value="ALT_INIT"/>
    <property type="molecule type" value="Genomic_DNA"/>
</dbReference>
<dbReference type="PIR" id="A81531">
    <property type="entry name" value="A81531"/>
</dbReference>
<dbReference type="PIR" id="E72008">
    <property type="entry name" value="E72008"/>
</dbReference>
<dbReference type="PIR" id="F86616">
    <property type="entry name" value="F86616"/>
</dbReference>
<dbReference type="RefSeq" id="NP_225203.1">
    <property type="nucleotide sequence ID" value="NC_000922.1"/>
</dbReference>
<dbReference type="RefSeq" id="WP_010883642.1">
    <property type="nucleotide sequence ID" value="NZ_LN847257.1"/>
</dbReference>
<dbReference type="SMR" id="Q9Z6Q0"/>
<dbReference type="STRING" id="406984.CPK_ORF00434"/>
<dbReference type="GeneID" id="45051066"/>
<dbReference type="KEGG" id="cpa:CP_0844"/>
<dbReference type="KEGG" id="cpj:map"/>
<dbReference type="KEGG" id="cpn:CPn_1009"/>
<dbReference type="KEGG" id="cpt:CpB1046"/>
<dbReference type="PATRIC" id="fig|115713.3.peg.1105"/>
<dbReference type="eggNOG" id="COG0024">
    <property type="taxonomic scope" value="Bacteria"/>
</dbReference>
<dbReference type="HOGENOM" id="CLU_015857_0_0_0"/>
<dbReference type="OrthoDB" id="9802055at2"/>
<dbReference type="Proteomes" id="UP000000583">
    <property type="component" value="Chromosome"/>
</dbReference>
<dbReference type="Proteomes" id="UP000000801">
    <property type="component" value="Chromosome"/>
</dbReference>
<dbReference type="GO" id="GO:0005829">
    <property type="term" value="C:cytosol"/>
    <property type="evidence" value="ECO:0007669"/>
    <property type="project" value="TreeGrafter"/>
</dbReference>
<dbReference type="GO" id="GO:0004239">
    <property type="term" value="F:initiator methionyl aminopeptidase activity"/>
    <property type="evidence" value="ECO:0007669"/>
    <property type="project" value="UniProtKB-UniRule"/>
</dbReference>
<dbReference type="GO" id="GO:0046872">
    <property type="term" value="F:metal ion binding"/>
    <property type="evidence" value="ECO:0007669"/>
    <property type="project" value="UniProtKB-UniRule"/>
</dbReference>
<dbReference type="GO" id="GO:0070006">
    <property type="term" value="F:metalloaminopeptidase activity"/>
    <property type="evidence" value="ECO:0007669"/>
    <property type="project" value="UniProtKB-UniRule"/>
</dbReference>
<dbReference type="GO" id="GO:0006508">
    <property type="term" value="P:proteolysis"/>
    <property type="evidence" value="ECO:0007669"/>
    <property type="project" value="UniProtKB-KW"/>
</dbReference>
<dbReference type="CDD" id="cd01086">
    <property type="entry name" value="MetAP1"/>
    <property type="match status" value="1"/>
</dbReference>
<dbReference type="Gene3D" id="3.10.450.50">
    <property type="match status" value="1"/>
</dbReference>
<dbReference type="Gene3D" id="3.90.230.10">
    <property type="entry name" value="Creatinase/methionine aminopeptidase superfamily"/>
    <property type="match status" value="1"/>
</dbReference>
<dbReference type="HAMAP" id="MF_01974">
    <property type="entry name" value="MetAP_1"/>
    <property type="match status" value="1"/>
</dbReference>
<dbReference type="InterPro" id="IPR036005">
    <property type="entry name" value="Creatinase/aminopeptidase-like"/>
</dbReference>
<dbReference type="InterPro" id="IPR000994">
    <property type="entry name" value="Pept_M24"/>
</dbReference>
<dbReference type="InterPro" id="IPR001714">
    <property type="entry name" value="Pept_M24_MAP"/>
</dbReference>
<dbReference type="InterPro" id="IPR002467">
    <property type="entry name" value="Pept_M24A_MAP1"/>
</dbReference>
<dbReference type="InterPro" id="IPR004027">
    <property type="entry name" value="SEC_C_motif"/>
</dbReference>
<dbReference type="NCBIfam" id="TIGR00500">
    <property type="entry name" value="met_pdase_I"/>
    <property type="match status" value="1"/>
</dbReference>
<dbReference type="NCBIfam" id="NF008970">
    <property type="entry name" value="PRK12318.1"/>
    <property type="match status" value="1"/>
</dbReference>
<dbReference type="PANTHER" id="PTHR43330">
    <property type="entry name" value="METHIONINE AMINOPEPTIDASE"/>
    <property type="match status" value="1"/>
</dbReference>
<dbReference type="PANTHER" id="PTHR43330:SF27">
    <property type="entry name" value="METHIONINE AMINOPEPTIDASE"/>
    <property type="match status" value="1"/>
</dbReference>
<dbReference type="Pfam" id="PF00557">
    <property type="entry name" value="Peptidase_M24"/>
    <property type="match status" value="1"/>
</dbReference>
<dbReference type="Pfam" id="PF02810">
    <property type="entry name" value="SEC-C"/>
    <property type="match status" value="1"/>
</dbReference>
<dbReference type="PRINTS" id="PR00599">
    <property type="entry name" value="MAPEPTIDASE"/>
</dbReference>
<dbReference type="SUPFAM" id="SSF55920">
    <property type="entry name" value="Creatinase/aminopeptidase"/>
    <property type="match status" value="1"/>
</dbReference>
<dbReference type="SUPFAM" id="SSF103642">
    <property type="entry name" value="Sec-C motif"/>
    <property type="match status" value="1"/>
</dbReference>
<dbReference type="PROSITE" id="PS00680">
    <property type="entry name" value="MAP_1"/>
    <property type="match status" value="1"/>
</dbReference>
<organism>
    <name type="scientific">Chlamydia pneumoniae</name>
    <name type="common">Chlamydophila pneumoniae</name>
    <dbReference type="NCBI Taxonomy" id="83558"/>
    <lineage>
        <taxon>Bacteria</taxon>
        <taxon>Pseudomonadati</taxon>
        <taxon>Chlamydiota</taxon>
        <taxon>Chlamydiia</taxon>
        <taxon>Chlamydiales</taxon>
        <taxon>Chlamydiaceae</taxon>
        <taxon>Chlamydia/Chlamydophila group</taxon>
        <taxon>Chlamydia</taxon>
    </lineage>
</organism>
<proteinExistence type="inferred from homology"/>
<protein>
    <recommendedName>
        <fullName evidence="1">Methionine aminopeptidase</fullName>
        <shortName evidence="1">MAP</shortName>
        <shortName evidence="1">MetAP</shortName>
        <ecNumber evidence="1">3.4.11.18</ecNumber>
    </recommendedName>
    <alternativeName>
        <fullName evidence="1">Peptidase M</fullName>
    </alternativeName>
</protein>
<gene>
    <name evidence="1" type="primary">map</name>
    <name type="ordered locus">CPn_1009</name>
    <name type="ordered locus">CP_0844</name>
    <name type="ordered locus">CpB1046</name>
</gene>
<sequence>MKRNDPCWCGSGRKWKQCHYPQPPKMSPEALKQHYASQYNILLKTPEQKAKIYNACQITARILDELCKASQKGVTTNELDELSQELHKKYDAIAAPFHYGSPPFPKTICTSLNEVICHGIPNDIPLKDGDIMNIDVSCIVDGYYGDCSRMVMIGEVPEIKKKICQAALECLNDSIAILKPGIPLCEIGEAIEARADTYGFSVVDQFVGHGVGIEFHENPYVPHYRNRSMIPLAPGMIFTIEPMINVGKKEGVVDPKNQWEARTCDNQPSAQWEHTIAITETGYEILTLLND</sequence>